<feature type="chain" id="PRO_0000347176" description="Large ribosomal subunit protein uL30">
    <location>
        <begin position="1"/>
        <end position="153"/>
    </location>
</feature>
<name>RL30_METAR</name>
<sequence length="153" mass="17136">MYAIIRLKGSVNTRPEIKDTLRMLRLNQINHCVVVEENPTYKGMIQVVKDYVAFGVINADTLAMIMEHRGRLEGGDRLTNEYVAKNSSYKSIKEFAAAVAEGKAKLGDMPGLKPVFRMHPPRKGHKGLKRTYQQGGALGNYGEEIASLVEQMR</sequence>
<protein>
    <recommendedName>
        <fullName evidence="1">Large ribosomal subunit protein uL30</fullName>
    </recommendedName>
    <alternativeName>
        <fullName evidence="2">50S ribosomal protein L30</fullName>
    </alternativeName>
</protein>
<organism>
    <name type="scientific">Methanocella arvoryzae (strain DSM 22066 / NBRC 105507 / MRE50)</name>
    <dbReference type="NCBI Taxonomy" id="351160"/>
    <lineage>
        <taxon>Archaea</taxon>
        <taxon>Methanobacteriati</taxon>
        <taxon>Methanobacteriota</taxon>
        <taxon>Stenosarchaea group</taxon>
        <taxon>Methanomicrobia</taxon>
        <taxon>Methanocellales</taxon>
        <taxon>Methanocellaceae</taxon>
        <taxon>Methanocella</taxon>
    </lineage>
</organism>
<accession>Q0W1W7</accession>
<dbReference type="EMBL" id="AM114193">
    <property type="protein sequence ID" value="CAJ37626.1"/>
    <property type="molecule type" value="Genomic_DNA"/>
</dbReference>
<dbReference type="RefSeq" id="WP_012034959.1">
    <property type="nucleotide sequence ID" value="NC_009464.1"/>
</dbReference>
<dbReference type="SMR" id="Q0W1W7"/>
<dbReference type="STRING" id="351160.RCIX2567"/>
<dbReference type="GeneID" id="5144361"/>
<dbReference type="KEGG" id="rci:RCIX2567"/>
<dbReference type="PATRIC" id="fig|351160.9.peg.657"/>
<dbReference type="eggNOG" id="arCOG04086">
    <property type="taxonomic scope" value="Archaea"/>
</dbReference>
<dbReference type="OrthoDB" id="6379at2157"/>
<dbReference type="Proteomes" id="UP000000663">
    <property type="component" value="Chromosome"/>
</dbReference>
<dbReference type="GO" id="GO:0022625">
    <property type="term" value="C:cytosolic large ribosomal subunit"/>
    <property type="evidence" value="ECO:0007669"/>
    <property type="project" value="TreeGrafter"/>
</dbReference>
<dbReference type="GO" id="GO:0003723">
    <property type="term" value="F:RNA binding"/>
    <property type="evidence" value="ECO:0007669"/>
    <property type="project" value="TreeGrafter"/>
</dbReference>
<dbReference type="GO" id="GO:0003735">
    <property type="term" value="F:structural constituent of ribosome"/>
    <property type="evidence" value="ECO:0007669"/>
    <property type="project" value="InterPro"/>
</dbReference>
<dbReference type="GO" id="GO:0000463">
    <property type="term" value="P:maturation of LSU-rRNA from tricistronic rRNA transcript (SSU-rRNA, 5.8S rRNA, LSU-rRNA)"/>
    <property type="evidence" value="ECO:0007669"/>
    <property type="project" value="TreeGrafter"/>
</dbReference>
<dbReference type="GO" id="GO:0006412">
    <property type="term" value="P:translation"/>
    <property type="evidence" value="ECO:0007669"/>
    <property type="project" value="UniProtKB-UniRule"/>
</dbReference>
<dbReference type="CDD" id="cd01657">
    <property type="entry name" value="Ribosomal_L7_archeal_euk"/>
    <property type="match status" value="1"/>
</dbReference>
<dbReference type="Gene3D" id="1.10.15.30">
    <property type="match status" value="1"/>
</dbReference>
<dbReference type="Gene3D" id="3.30.1390.20">
    <property type="entry name" value="Ribosomal protein L30, ferredoxin-like fold domain"/>
    <property type="match status" value="1"/>
</dbReference>
<dbReference type="HAMAP" id="MF_01371_A">
    <property type="entry name" value="Ribosomal_uL30_A"/>
    <property type="match status" value="1"/>
</dbReference>
<dbReference type="InterPro" id="IPR036919">
    <property type="entry name" value="Ribo_uL30_ferredoxin-like_sf"/>
</dbReference>
<dbReference type="InterPro" id="IPR039699">
    <property type="entry name" value="Ribosomal_uL30"/>
</dbReference>
<dbReference type="InterPro" id="IPR005997">
    <property type="entry name" value="Ribosomal_uL30_arc"/>
</dbReference>
<dbReference type="InterPro" id="IPR018038">
    <property type="entry name" value="Ribosomal_uL30_CS"/>
</dbReference>
<dbReference type="InterPro" id="IPR035808">
    <property type="entry name" value="Ribosomal_uL30_euk_arc"/>
</dbReference>
<dbReference type="InterPro" id="IPR016082">
    <property type="entry name" value="Ribosomal_uL30_ferredoxin-like"/>
</dbReference>
<dbReference type="NCBIfam" id="NF004711">
    <property type="entry name" value="PRK06049.1"/>
    <property type="match status" value="1"/>
</dbReference>
<dbReference type="NCBIfam" id="TIGR01309">
    <property type="entry name" value="uL30_arch"/>
    <property type="match status" value="1"/>
</dbReference>
<dbReference type="PANTHER" id="PTHR11524">
    <property type="entry name" value="60S RIBOSOMAL PROTEIN L7"/>
    <property type="match status" value="1"/>
</dbReference>
<dbReference type="PANTHER" id="PTHR11524:SF16">
    <property type="entry name" value="LARGE RIBOSOMAL SUBUNIT PROTEIN UL30"/>
    <property type="match status" value="1"/>
</dbReference>
<dbReference type="Pfam" id="PF00327">
    <property type="entry name" value="Ribosomal_L30"/>
    <property type="match status" value="1"/>
</dbReference>
<dbReference type="SUPFAM" id="SSF55129">
    <property type="entry name" value="Ribosomal protein L30p/L7e"/>
    <property type="match status" value="1"/>
</dbReference>
<dbReference type="PROSITE" id="PS00634">
    <property type="entry name" value="RIBOSOMAL_L30"/>
    <property type="match status" value="1"/>
</dbReference>
<proteinExistence type="inferred from homology"/>
<comment type="subunit">
    <text evidence="1">Part of the 50S ribosomal subunit.</text>
</comment>
<comment type="similarity">
    <text evidence="1">Belongs to the universal ribosomal protein uL30 family.</text>
</comment>
<reference key="1">
    <citation type="journal article" date="2006" name="Science">
        <title>Genome of rice cluster I archaea -- the key methane producers in the rice rhizosphere.</title>
        <authorList>
            <person name="Erkel C."/>
            <person name="Kube M."/>
            <person name="Reinhardt R."/>
            <person name="Liesack W."/>
        </authorList>
    </citation>
    <scope>NUCLEOTIDE SEQUENCE [LARGE SCALE GENOMIC DNA]</scope>
    <source>
        <strain>DSM 22066 / NBRC 105507 / MRE50</strain>
    </source>
</reference>
<gene>
    <name evidence="1" type="primary">rpl30</name>
    <name type="ordered locus">UNCMA_06300</name>
    <name type="ORF">RCIX2567</name>
</gene>
<evidence type="ECO:0000255" key="1">
    <source>
        <dbReference type="HAMAP-Rule" id="MF_01371"/>
    </source>
</evidence>
<evidence type="ECO:0000305" key="2"/>
<keyword id="KW-1185">Reference proteome</keyword>
<keyword id="KW-0687">Ribonucleoprotein</keyword>
<keyword id="KW-0689">Ribosomal protein</keyword>